<evidence type="ECO:0000250" key="1"/>
<evidence type="ECO:0000255" key="2"/>
<evidence type="ECO:0000305" key="3"/>
<reference key="1">
    <citation type="journal article" date="1996" name="Science">
        <title>Complete genome sequence of the methanogenic archaeon, Methanococcus jannaschii.</title>
        <authorList>
            <person name="Bult C.J."/>
            <person name="White O."/>
            <person name="Olsen G.J."/>
            <person name="Zhou L."/>
            <person name="Fleischmann R.D."/>
            <person name="Sutton G.G."/>
            <person name="Blake J.A."/>
            <person name="FitzGerald L.M."/>
            <person name="Clayton R.A."/>
            <person name="Gocayne J.D."/>
            <person name="Kerlavage A.R."/>
            <person name="Dougherty B.A."/>
            <person name="Tomb J.-F."/>
            <person name="Adams M.D."/>
            <person name="Reich C.I."/>
            <person name="Overbeek R."/>
            <person name="Kirkness E.F."/>
            <person name="Weinstock K.G."/>
            <person name="Merrick J.M."/>
            <person name="Glodek A."/>
            <person name="Scott J.L."/>
            <person name="Geoghagen N.S.M."/>
            <person name="Weidman J.F."/>
            <person name="Fuhrmann J.L."/>
            <person name="Nguyen D."/>
            <person name="Utterback T.R."/>
            <person name="Kelley J.M."/>
            <person name="Peterson J.D."/>
            <person name="Sadow P.W."/>
            <person name="Hanna M.C."/>
            <person name="Cotton M.D."/>
            <person name="Roberts K.M."/>
            <person name="Hurst M.A."/>
            <person name="Kaine B.P."/>
            <person name="Borodovsky M."/>
            <person name="Klenk H.-P."/>
            <person name="Fraser C.M."/>
            <person name="Smith H.O."/>
            <person name="Woese C.R."/>
            <person name="Venter J.C."/>
        </authorList>
    </citation>
    <scope>NUCLEOTIDE SEQUENCE [LARGE SCALE GENOMIC DNA]</scope>
    <source>
        <strain>ATCC 43067 / DSM 2661 / JAL-1 / JCM 10045 / NBRC 100440</strain>
    </source>
</reference>
<gene>
    <name type="primary">livM</name>
    <name type="ordered locus">MJ1270</name>
</gene>
<protein>
    <recommendedName>
        <fullName>Probable branched-chain amino acid transport permease protein LivM</fullName>
    </recommendedName>
</protein>
<comment type="function">
    <text evidence="1">Part of the binding-protein-dependent transport system for branched-chain amino acids. Probably responsible for the translocation of the substrates across the membrane (By similarity).</text>
</comment>
<comment type="subcellular location">
    <subcellularLocation>
        <location evidence="3">Cell membrane</location>
        <topology evidence="3">Multi-pass membrane protein</topology>
    </subcellularLocation>
</comment>
<comment type="similarity">
    <text evidence="3">Belongs to the binding-protein-dependent transport system permease family. LivHM subfamily.</text>
</comment>
<proteinExistence type="inferred from homology"/>
<accession>Q58666</accession>
<organism>
    <name type="scientific">Methanocaldococcus jannaschii (strain ATCC 43067 / DSM 2661 / JAL-1 / JCM 10045 / NBRC 100440)</name>
    <name type="common">Methanococcus jannaschii</name>
    <dbReference type="NCBI Taxonomy" id="243232"/>
    <lineage>
        <taxon>Archaea</taxon>
        <taxon>Methanobacteriati</taxon>
        <taxon>Methanobacteriota</taxon>
        <taxon>Methanomada group</taxon>
        <taxon>Methanococci</taxon>
        <taxon>Methanococcales</taxon>
        <taxon>Methanocaldococcaceae</taxon>
        <taxon>Methanocaldococcus</taxon>
    </lineage>
</organism>
<dbReference type="EMBL" id="L77117">
    <property type="protein sequence ID" value="AAB99276.1"/>
    <property type="molecule type" value="Genomic_DNA"/>
</dbReference>
<dbReference type="PIR" id="E64458">
    <property type="entry name" value="E64458"/>
</dbReference>
<dbReference type="RefSeq" id="WP_010870783.1">
    <property type="nucleotide sequence ID" value="NC_000909.1"/>
</dbReference>
<dbReference type="FunCoup" id="Q58666">
    <property type="interactions" value="10"/>
</dbReference>
<dbReference type="STRING" id="243232.MJ_1270"/>
<dbReference type="PaxDb" id="243232-MJ_1270"/>
<dbReference type="EnsemblBacteria" id="AAB99276">
    <property type="protein sequence ID" value="AAB99276"/>
    <property type="gene ID" value="MJ_1270"/>
</dbReference>
<dbReference type="GeneID" id="1452168"/>
<dbReference type="KEGG" id="mja:MJ_1270"/>
<dbReference type="eggNOG" id="arCOG01273">
    <property type="taxonomic scope" value="Archaea"/>
</dbReference>
<dbReference type="HOGENOM" id="CLU_031365_1_0_2"/>
<dbReference type="InParanoid" id="Q58666"/>
<dbReference type="OrthoDB" id="15394at2157"/>
<dbReference type="PhylomeDB" id="Q58666"/>
<dbReference type="Proteomes" id="UP000000805">
    <property type="component" value="Chromosome"/>
</dbReference>
<dbReference type="GO" id="GO:0005886">
    <property type="term" value="C:plasma membrane"/>
    <property type="evidence" value="ECO:0000318"/>
    <property type="project" value="GO_Central"/>
</dbReference>
<dbReference type="GO" id="GO:0015658">
    <property type="term" value="F:branched-chain amino acid transmembrane transporter activity"/>
    <property type="evidence" value="ECO:0007669"/>
    <property type="project" value="InterPro"/>
</dbReference>
<dbReference type="GO" id="GO:0006865">
    <property type="term" value="P:amino acid transport"/>
    <property type="evidence" value="ECO:0007669"/>
    <property type="project" value="UniProtKB-KW"/>
</dbReference>
<dbReference type="CDD" id="cd06581">
    <property type="entry name" value="TM_PBP1_LivM_like"/>
    <property type="match status" value="1"/>
</dbReference>
<dbReference type="InterPro" id="IPR001851">
    <property type="entry name" value="ABC_transp_permease"/>
</dbReference>
<dbReference type="InterPro" id="IPR043428">
    <property type="entry name" value="LivM-like"/>
</dbReference>
<dbReference type="PANTHER" id="PTHR30482:SF1">
    <property type="entry name" value="BRANCHED-CHAIN AMINO ACID TRANSPORT PERMEASE PROTEIN LIVM-RELATED"/>
    <property type="match status" value="1"/>
</dbReference>
<dbReference type="PANTHER" id="PTHR30482">
    <property type="entry name" value="HIGH-AFFINITY BRANCHED-CHAIN AMINO ACID TRANSPORT SYSTEM PERMEASE"/>
    <property type="match status" value="1"/>
</dbReference>
<dbReference type="Pfam" id="PF02653">
    <property type="entry name" value="BPD_transp_2"/>
    <property type="match status" value="1"/>
</dbReference>
<name>LIVM_METJA</name>
<sequence length="345" mass="37937">MSIDLISMILLWFGLYYIVSLSLNMEFGYAGIPNFGKALSVLVGAIAVGGILDRLLMLYFGIGGDFITGTTYATSAINNLIASNPIVGIGILILAIILASILGFVVGAIFILPSAKLKEDYLGITLLAISEAVLLICTYNLNIIGGYYGISTPDILAFVSGEYRGWVFAWIVLFIAFLVYLFFERLLNTPFGRVLRAMRENENTVKAFGRDIMKLRIKTMAIGSAIGAIAGVLYSLYTVNIIANAFTRVDWTFFPFLMVLLGGKGNNKGVALGVLCYVIVKVLLDIYKYNIKYALGIPFEPVWLSYMLFGVLMLLILYYKPSGLIPEKPIITPPMKKKIMEISGK</sequence>
<keyword id="KW-0029">Amino-acid transport</keyword>
<keyword id="KW-1003">Cell membrane</keyword>
<keyword id="KW-0472">Membrane</keyword>
<keyword id="KW-1185">Reference proteome</keyword>
<keyword id="KW-0812">Transmembrane</keyword>
<keyword id="KW-1133">Transmembrane helix</keyword>
<keyword id="KW-0813">Transport</keyword>
<feature type="chain" id="PRO_0000060065" description="Probable branched-chain amino acid transport permease protein LivM">
    <location>
        <begin position="1"/>
        <end position="345"/>
    </location>
</feature>
<feature type="transmembrane region" description="Helical" evidence="2">
    <location>
        <begin position="3"/>
        <end position="23"/>
    </location>
</feature>
<feature type="transmembrane region" description="Helical" evidence="2">
    <location>
        <begin position="42"/>
        <end position="62"/>
    </location>
</feature>
<feature type="transmembrane region" description="Helical" evidence="2">
    <location>
        <begin position="91"/>
        <end position="111"/>
    </location>
</feature>
<feature type="transmembrane region" description="Helical" evidence="2">
    <location>
        <begin position="124"/>
        <end position="144"/>
    </location>
</feature>
<feature type="transmembrane region" description="Helical" evidence="2">
    <location>
        <begin position="163"/>
        <end position="183"/>
    </location>
</feature>
<feature type="transmembrane region" description="Helical" evidence="2">
    <location>
        <begin position="222"/>
        <end position="242"/>
    </location>
</feature>
<feature type="transmembrane region" description="Helical" evidence="2">
    <location>
        <begin position="269"/>
        <end position="289"/>
    </location>
</feature>
<feature type="transmembrane region" description="Helical" evidence="2">
    <location>
        <begin position="297"/>
        <end position="317"/>
    </location>
</feature>